<organism>
    <name type="scientific">Yersinia pseudotuberculosis serotype I (strain IP32953)</name>
    <dbReference type="NCBI Taxonomy" id="273123"/>
    <lineage>
        <taxon>Bacteria</taxon>
        <taxon>Pseudomonadati</taxon>
        <taxon>Pseudomonadota</taxon>
        <taxon>Gammaproteobacteria</taxon>
        <taxon>Enterobacterales</taxon>
        <taxon>Yersiniaceae</taxon>
        <taxon>Yersinia</taxon>
    </lineage>
</organism>
<dbReference type="EC" id="3.1.3.15" evidence="1"/>
<dbReference type="EC" id="4.2.1.19" evidence="1"/>
<dbReference type="EMBL" id="BX936398">
    <property type="protein sequence ID" value="CAH20798.1"/>
    <property type="molecule type" value="Genomic_DNA"/>
</dbReference>
<dbReference type="RefSeq" id="WP_011192120.1">
    <property type="nucleotide sequence ID" value="NC_006155.1"/>
</dbReference>
<dbReference type="SMR" id="Q66C51"/>
<dbReference type="KEGG" id="ypo:BZ17_956"/>
<dbReference type="KEGG" id="yps:YPTB1559"/>
<dbReference type="PATRIC" id="fig|273123.14.peg.1016"/>
<dbReference type="UniPathway" id="UPA00031">
    <property type="reaction ID" value="UER00011"/>
</dbReference>
<dbReference type="UniPathway" id="UPA00031">
    <property type="reaction ID" value="UER00013"/>
</dbReference>
<dbReference type="Proteomes" id="UP000001011">
    <property type="component" value="Chromosome"/>
</dbReference>
<dbReference type="GO" id="GO:0005737">
    <property type="term" value="C:cytoplasm"/>
    <property type="evidence" value="ECO:0007669"/>
    <property type="project" value="UniProtKB-SubCell"/>
</dbReference>
<dbReference type="GO" id="GO:0004401">
    <property type="term" value="F:histidinol-phosphatase activity"/>
    <property type="evidence" value="ECO:0007669"/>
    <property type="project" value="UniProtKB-UniRule"/>
</dbReference>
<dbReference type="GO" id="GO:0004424">
    <property type="term" value="F:imidazoleglycerol-phosphate dehydratase activity"/>
    <property type="evidence" value="ECO:0007669"/>
    <property type="project" value="UniProtKB-UniRule"/>
</dbReference>
<dbReference type="GO" id="GO:0046872">
    <property type="term" value="F:metal ion binding"/>
    <property type="evidence" value="ECO:0007669"/>
    <property type="project" value="UniProtKB-KW"/>
</dbReference>
<dbReference type="GO" id="GO:0000105">
    <property type="term" value="P:L-histidine biosynthetic process"/>
    <property type="evidence" value="ECO:0007669"/>
    <property type="project" value="UniProtKB-UniRule"/>
</dbReference>
<dbReference type="CDD" id="cd07503">
    <property type="entry name" value="HAD_HisB-N"/>
    <property type="match status" value="1"/>
</dbReference>
<dbReference type="CDD" id="cd07914">
    <property type="entry name" value="IGPD"/>
    <property type="match status" value="1"/>
</dbReference>
<dbReference type="FunFam" id="3.40.50.1000:FF:000061">
    <property type="entry name" value="Histidine biosynthesis bifunctional protein HisB"/>
    <property type="match status" value="1"/>
</dbReference>
<dbReference type="FunFam" id="3.30.230.40:FF:000001">
    <property type="entry name" value="Imidazoleglycerol-phosphate dehydratase HisB"/>
    <property type="match status" value="1"/>
</dbReference>
<dbReference type="FunFam" id="3.30.230.40:FF:000003">
    <property type="entry name" value="Imidazoleglycerol-phosphate dehydratase HisB"/>
    <property type="match status" value="1"/>
</dbReference>
<dbReference type="Gene3D" id="3.40.50.1000">
    <property type="entry name" value="HAD superfamily/HAD-like"/>
    <property type="match status" value="1"/>
</dbReference>
<dbReference type="Gene3D" id="3.30.230.40">
    <property type="entry name" value="Imidazole glycerol phosphate dehydratase, domain 1"/>
    <property type="match status" value="2"/>
</dbReference>
<dbReference type="HAMAP" id="MF_01022">
    <property type="entry name" value="Bifunc_HisB"/>
    <property type="match status" value="1"/>
</dbReference>
<dbReference type="HAMAP" id="MF_00076">
    <property type="entry name" value="HisB"/>
    <property type="match status" value="1"/>
</dbReference>
<dbReference type="InterPro" id="IPR036412">
    <property type="entry name" value="HAD-like_sf"/>
</dbReference>
<dbReference type="InterPro" id="IPR006549">
    <property type="entry name" value="HAD-SF_hydro_IIIA"/>
</dbReference>
<dbReference type="InterPro" id="IPR023214">
    <property type="entry name" value="HAD_sf"/>
</dbReference>
<dbReference type="InterPro" id="IPR020566">
    <property type="entry name" value="His_synth_bifunc_HisB"/>
</dbReference>
<dbReference type="InterPro" id="IPR005954">
    <property type="entry name" value="HisB_N"/>
</dbReference>
<dbReference type="InterPro" id="IPR006543">
    <property type="entry name" value="Histidinol-phos"/>
</dbReference>
<dbReference type="InterPro" id="IPR038494">
    <property type="entry name" value="IGPD_sf"/>
</dbReference>
<dbReference type="InterPro" id="IPR000807">
    <property type="entry name" value="ImidazoleglycerolP_deHydtase"/>
</dbReference>
<dbReference type="InterPro" id="IPR020565">
    <property type="entry name" value="ImidazoleglycerP_deHydtase_CS"/>
</dbReference>
<dbReference type="InterPro" id="IPR020568">
    <property type="entry name" value="Ribosomal_Su5_D2-typ_SF"/>
</dbReference>
<dbReference type="NCBIfam" id="TIGR01662">
    <property type="entry name" value="HAD-SF-IIIA"/>
    <property type="match status" value="1"/>
</dbReference>
<dbReference type="NCBIfam" id="TIGR01261">
    <property type="entry name" value="hisB_Nterm"/>
    <property type="match status" value="1"/>
</dbReference>
<dbReference type="NCBIfam" id="TIGR01656">
    <property type="entry name" value="Histidinol-ppas"/>
    <property type="match status" value="1"/>
</dbReference>
<dbReference type="NCBIfam" id="NF002111">
    <property type="entry name" value="PRK00951.2-1"/>
    <property type="match status" value="1"/>
</dbReference>
<dbReference type="NCBIfam" id="NF003937">
    <property type="entry name" value="PRK05446.1"/>
    <property type="match status" value="1"/>
</dbReference>
<dbReference type="PANTHER" id="PTHR23133:SF2">
    <property type="entry name" value="IMIDAZOLEGLYCEROL-PHOSPHATE DEHYDRATASE"/>
    <property type="match status" value="1"/>
</dbReference>
<dbReference type="PANTHER" id="PTHR23133">
    <property type="entry name" value="IMIDAZOLEGLYCEROL-PHOSPHATE DEHYDRATASE HIS7"/>
    <property type="match status" value="1"/>
</dbReference>
<dbReference type="Pfam" id="PF13242">
    <property type="entry name" value="Hydrolase_like"/>
    <property type="match status" value="1"/>
</dbReference>
<dbReference type="Pfam" id="PF00475">
    <property type="entry name" value="IGPD"/>
    <property type="match status" value="1"/>
</dbReference>
<dbReference type="SUPFAM" id="SSF56784">
    <property type="entry name" value="HAD-like"/>
    <property type="match status" value="1"/>
</dbReference>
<dbReference type="SUPFAM" id="SSF54211">
    <property type="entry name" value="Ribosomal protein S5 domain 2-like"/>
    <property type="match status" value="2"/>
</dbReference>
<dbReference type="PROSITE" id="PS00954">
    <property type="entry name" value="IGP_DEHYDRATASE_1"/>
    <property type="match status" value="1"/>
</dbReference>
<dbReference type="PROSITE" id="PS00955">
    <property type="entry name" value="IGP_DEHYDRATASE_2"/>
    <property type="match status" value="1"/>
</dbReference>
<gene>
    <name evidence="1" type="primary">hisB</name>
    <name type="ordered locus">YPTB1559</name>
</gene>
<feature type="chain" id="PRO_0000158232" description="Histidine biosynthesis bifunctional protein HisB">
    <location>
        <begin position="1"/>
        <end position="355"/>
    </location>
</feature>
<feature type="region of interest" description="Histidinol-phosphatase" evidence="1">
    <location>
        <begin position="1"/>
        <end position="166"/>
    </location>
</feature>
<feature type="region of interest" description="Imidazoleglycerol-phosphate dehydratase" evidence="1">
    <location>
        <begin position="167"/>
        <end position="355"/>
    </location>
</feature>
<feature type="active site" description="Nucleophile" evidence="1">
    <location>
        <position position="9"/>
    </location>
</feature>
<feature type="active site" description="Proton donor" evidence="1">
    <location>
        <position position="11"/>
    </location>
</feature>
<feature type="binding site" evidence="1">
    <location>
        <position position="9"/>
    </location>
    <ligand>
        <name>Mg(2+)</name>
        <dbReference type="ChEBI" id="CHEBI:18420"/>
    </ligand>
</feature>
<feature type="binding site" evidence="1">
    <location>
        <position position="11"/>
    </location>
    <ligand>
        <name>Mg(2+)</name>
        <dbReference type="ChEBI" id="CHEBI:18420"/>
    </ligand>
</feature>
<feature type="binding site" evidence="1">
    <location>
        <position position="93"/>
    </location>
    <ligand>
        <name>Zn(2+)</name>
        <dbReference type="ChEBI" id="CHEBI:29105"/>
    </ligand>
</feature>
<feature type="binding site" evidence="1">
    <location>
        <position position="95"/>
    </location>
    <ligand>
        <name>Zn(2+)</name>
        <dbReference type="ChEBI" id="CHEBI:29105"/>
    </ligand>
</feature>
<feature type="binding site" evidence="1">
    <location>
        <position position="101"/>
    </location>
    <ligand>
        <name>Zn(2+)</name>
        <dbReference type="ChEBI" id="CHEBI:29105"/>
    </ligand>
</feature>
<feature type="binding site" evidence="1">
    <location>
        <position position="103"/>
    </location>
    <ligand>
        <name>Zn(2+)</name>
        <dbReference type="ChEBI" id="CHEBI:29105"/>
    </ligand>
</feature>
<feature type="binding site" evidence="1">
    <location>
        <position position="130"/>
    </location>
    <ligand>
        <name>Mg(2+)</name>
        <dbReference type="ChEBI" id="CHEBI:18420"/>
    </ligand>
</feature>
<sequence length="355" mass="39892">MSQKFLFIDRDGTIIAEPPTDYQVDRLDKLALEPDVIPALLALQKADYKLVMITNQDGLGTSSFPQETFDPPHNLMMQILTSQGINFEQILICPHLPEDNCTCRKPKTALVESYLADGVMNSATSYVIGDRETDLQLAENMGISGLRYQRDGLNWTQIAKQLTQRDRHAYVNRVTKETAIDVNVWLDREGGSKIKTGVGFFDHMLDQIATHGGFRMDIQVSGDLYIDDHHTVEDTALALGEAINIALGDKRGIGRFGFVLPMDECLARCALDISGRPHLEYKAEFNYQRVGDLSTEMVEHFFRSLSYAMACTLHLKTKGRNDHHRVESLFKVFGRTLRQAIRVEGNTLPSSKGVL</sequence>
<reference key="1">
    <citation type="journal article" date="2004" name="Proc. Natl. Acad. Sci. U.S.A.">
        <title>Insights into the evolution of Yersinia pestis through whole-genome comparison with Yersinia pseudotuberculosis.</title>
        <authorList>
            <person name="Chain P.S.G."/>
            <person name="Carniel E."/>
            <person name="Larimer F.W."/>
            <person name="Lamerdin J."/>
            <person name="Stoutland P.O."/>
            <person name="Regala W.M."/>
            <person name="Georgescu A.M."/>
            <person name="Vergez L.M."/>
            <person name="Land M.L."/>
            <person name="Motin V.L."/>
            <person name="Brubaker R.R."/>
            <person name="Fowler J."/>
            <person name="Hinnebusch J."/>
            <person name="Marceau M."/>
            <person name="Medigue C."/>
            <person name="Simonet M."/>
            <person name="Chenal-Francisque V."/>
            <person name="Souza B."/>
            <person name="Dacheux D."/>
            <person name="Elliott J.M."/>
            <person name="Derbise A."/>
            <person name="Hauser L.J."/>
            <person name="Garcia E."/>
        </authorList>
    </citation>
    <scope>NUCLEOTIDE SEQUENCE [LARGE SCALE GENOMIC DNA]</scope>
    <source>
        <strain>IP32953</strain>
    </source>
</reference>
<protein>
    <recommendedName>
        <fullName evidence="1">Histidine biosynthesis bifunctional protein HisB</fullName>
    </recommendedName>
    <domain>
        <recommendedName>
            <fullName evidence="1">Histidinol-phosphatase</fullName>
            <ecNumber evidence="1">3.1.3.15</ecNumber>
        </recommendedName>
    </domain>
    <domain>
        <recommendedName>
            <fullName evidence="1">Imidazoleglycerol-phosphate dehydratase</fullName>
            <shortName evidence="1">IGPD</shortName>
            <ecNumber evidence="1">4.2.1.19</ecNumber>
        </recommendedName>
    </domain>
</protein>
<keyword id="KW-0028">Amino-acid biosynthesis</keyword>
<keyword id="KW-0963">Cytoplasm</keyword>
<keyword id="KW-0368">Histidine biosynthesis</keyword>
<keyword id="KW-0378">Hydrolase</keyword>
<keyword id="KW-0456">Lyase</keyword>
<keyword id="KW-0460">Magnesium</keyword>
<keyword id="KW-0479">Metal-binding</keyword>
<keyword id="KW-0511">Multifunctional enzyme</keyword>
<keyword id="KW-0862">Zinc</keyword>
<proteinExistence type="inferred from homology"/>
<accession>Q66C51</accession>
<name>HIS7_YERPS</name>
<comment type="catalytic activity">
    <reaction evidence="1">
        <text>D-erythro-1-(imidazol-4-yl)glycerol 3-phosphate = 3-(imidazol-4-yl)-2-oxopropyl phosphate + H2O</text>
        <dbReference type="Rhea" id="RHEA:11040"/>
        <dbReference type="ChEBI" id="CHEBI:15377"/>
        <dbReference type="ChEBI" id="CHEBI:57766"/>
        <dbReference type="ChEBI" id="CHEBI:58278"/>
        <dbReference type="EC" id="4.2.1.19"/>
    </reaction>
</comment>
<comment type="catalytic activity">
    <reaction evidence="1">
        <text>L-histidinol phosphate + H2O = L-histidinol + phosphate</text>
        <dbReference type="Rhea" id="RHEA:14465"/>
        <dbReference type="ChEBI" id="CHEBI:15377"/>
        <dbReference type="ChEBI" id="CHEBI:43474"/>
        <dbReference type="ChEBI" id="CHEBI:57699"/>
        <dbReference type="ChEBI" id="CHEBI:57980"/>
        <dbReference type="EC" id="3.1.3.15"/>
    </reaction>
</comment>
<comment type="cofactor">
    <cofactor evidence="1">
        <name>Mg(2+)</name>
        <dbReference type="ChEBI" id="CHEBI:18420"/>
    </cofactor>
</comment>
<comment type="cofactor">
    <cofactor evidence="1">
        <name>Zn(2+)</name>
        <dbReference type="ChEBI" id="CHEBI:29105"/>
    </cofactor>
</comment>
<comment type="pathway">
    <text evidence="1">Amino-acid biosynthesis; L-histidine biosynthesis; L-histidine from 5-phospho-alpha-D-ribose 1-diphosphate: step 6/9.</text>
</comment>
<comment type="pathway">
    <text evidence="1">Amino-acid biosynthesis; L-histidine biosynthesis; L-histidine from 5-phospho-alpha-D-ribose 1-diphosphate: step 8/9.</text>
</comment>
<comment type="subcellular location">
    <subcellularLocation>
        <location evidence="1">Cytoplasm</location>
    </subcellularLocation>
</comment>
<comment type="similarity">
    <text evidence="1">In the N-terminal section; belongs to the histidinol-phosphatase family.</text>
</comment>
<comment type="similarity">
    <text evidence="1">In the C-terminal section; belongs to the imidazoleglycerol-phosphate dehydratase family.</text>
</comment>
<evidence type="ECO:0000255" key="1">
    <source>
        <dbReference type="HAMAP-Rule" id="MF_01022"/>
    </source>
</evidence>